<gene>
    <name type="primary">NEK1</name>
    <name type="synonym">KIAA1901</name>
</gene>
<sequence length="1258" mass="142828">MEKYVRLQKIGEGSFGKAILVKSTEDGRQYVIKEINISRMSSKEREESRREVAVLANMKHPNIVQYRESFEENGSLYIVMDYCEGGDLFKRINAQKGVLFQEDQILDWFVQICLALKHVHDRKILHRDIKSQNIFLTKDGTVQLGDFGIARVLNSTVELARTCIGTPYYLSPEICENKPYNNKSDIWALGCVLYELCTLKHAFEAGSMKNLVLKIISGSFPPVSLHYSYDLRSLVSQLFKRNPRDRPSVNSILEKGFIAKRIEKFLSPQLIAEEFCLKTFSKFGSQPIPAKRPASGQNSISVMPAQKITKPAAKYGIPLAYKKYGDKKLHEKKPLQKHKQAHQTPEKRVNTGEERRKISEEAARKRRLEFIEKEKKQKDQIISLMKAEQMKRQEKERLERINRAREQGWRNVLSAGGSGEVKAPFLGSGGTIAPSSFSSRGQYEHYHAIFDQMQQQRAEDNEAKWKREIYGRGLPERGILPGVRPGFPYGAAGHHHFPDADDIRKTLKRLKAVSKQANANRQKGQLAVERAKQVEEFLQRKREAMQNKARAEGHMVYLARLRQIRLQNFNERQQIKAKLRGEKKEANHSEGQEGSEEADMRRKKIESLKAHANARAAVLKEQLERKRKEAYEREKKVWEEHLVAKGVKSSDVSPPLGQHETGGSPSKQQMRSVISVTSALKEVGVDSSLTDTRETSEEMQKTNNAISSKREILRRLNENLKAQEDEKGKQNLSDTFEINVHEDAKEHEKEKSVSSDRKKWEAGGQLVIPLDELTLDTSFSTTERHTVGEVIKLGPNGSPRRAWGKSPTDSVLKILGEAELQLQTELLENTTIRSEISPEGEKYKPLITGEKKVQCISHEINPSAIVDSPVETKSPEFSEASPQMSLKLEGNLEEPDDLETEILQEPSGTNKDESLPCTITDVWISEEKETKETQSADRITIQENEVSEDGVSSTVDQLSDIHIEPGTNDSQHSKCDVDKSVQPEPFFHKVVHSEHLNLVPQVQSVQCSPEESFAFRSHSHLPPKNKNKNSLLIGLSTGLFDANNPKMLRTCSLPDLSKLFRTLMDVPTVGDVRQDNLEIDEIEDENIKEGPSDSEDIVFEETDTDLQELQASMEQLLREQPGEEYSEEEESVLKNSDVEPTANGTDVADEDDNPSSESALNEEWHSDNSDGEIASECECDSVFNHLEELRLHLEQEMGFEKFFEVYEKIKAIHEDEDENIEICSKIVQNILGNEHQHLYAKILHLVMADGAYQEDNDE</sequence>
<reference key="1">
    <citation type="journal article" date="2001" name="DNA Res.">
        <title>Prediction of the coding sequences of unidentified human genes. XXI. The complete sequences of 60 new cDNA clones from brain which code for large proteins.</title>
        <authorList>
            <person name="Nagase T."/>
            <person name="Kikuno R."/>
            <person name="Ohara O."/>
        </authorList>
    </citation>
    <scope>NUCLEOTIDE SEQUENCE [LARGE SCALE MRNA] (ISOFORM 1)</scope>
    <source>
        <tissue>Brain</tissue>
    </source>
</reference>
<reference key="2">
    <citation type="journal article" date="2007" name="BMC Genomics">
        <title>The full-ORF clone resource of the German cDNA consortium.</title>
        <authorList>
            <person name="Bechtel S."/>
            <person name="Rosenfelder H."/>
            <person name="Duda A."/>
            <person name="Schmidt C.P."/>
            <person name="Ernst U."/>
            <person name="Wellenreuther R."/>
            <person name="Mehrle A."/>
            <person name="Schuster C."/>
            <person name="Bahr A."/>
            <person name="Bloecker H."/>
            <person name="Heubner D."/>
            <person name="Hoerlein A."/>
            <person name="Michel G."/>
            <person name="Wedler H."/>
            <person name="Koehrer K."/>
            <person name="Ottenwaelder B."/>
            <person name="Poustka A."/>
            <person name="Wiemann S."/>
            <person name="Schupp I."/>
        </authorList>
    </citation>
    <scope>NUCLEOTIDE SEQUENCE [LARGE SCALE MRNA] (ISOFORM 3)</scope>
    <scope>VARIANT GLY-724</scope>
    <source>
        <tissue>Uterus</tissue>
    </source>
</reference>
<reference key="3">
    <citation type="journal article" date="2005" name="Nature">
        <title>Generation and annotation of the DNA sequences of human chromosomes 2 and 4.</title>
        <authorList>
            <person name="Hillier L.W."/>
            <person name="Graves T.A."/>
            <person name="Fulton R.S."/>
            <person name="Fulton L.A."/>
            <person name="Pepin K.H."/>
            <person name="Minx P."/>
            <person name="Wagner-McPherson C."/>
            <person name="Layman D."/>
            <person name="Wylie K."/>
            <person name="Sekhon M."/>
            <person name="Becker M.C."/>
            <person name="Fewell G.A."/>
            <person name="Delehaunty K.D."/>
            <person name="Miner T.L."/>
            <person name="Nash W.E."/>
            <person name="Kremitzki C."/>
            <person name="Oddy L."/>
            <person name="Du H."/>
            <person name="Sun H."/>
            <person name="Bradshaw-Cordum H."/>
            <person name="Ali J."/>
            <person name="Carter J."/>
            <person name="Cordes M."/>
            <person name="Harris A."/>
            <person name="Isak A."/>
            <person name="van Brunt A."/>
            <person name="Nguyen C."/>
            <person name="Du F."/>
            <person name="Courtney L."/>
            <person name="Kalicki J."/>
            <person name="Ozersky P."/>
            <person name="Abbott S."/>
            <person name="Armstrong J."/>
            <person name="Belter E.A."/>
            <person name="Caruso L."/>
            <person name="Cedroni M."/>
            <person name="Cotton M."/>
            <person name="Davidson T."/>
            <person name="Desai A."/>
            <person name="Elliott G."/>
            <person name="Erb T."/>
            <person name="Fronick C."/>
            <person name="Gaige T."/>
            <person name="Haakenson W."/>
            <person name="Haglund K."/>
            <person name="Holmes A."/>
            <person name="Harkins R."/>
            <person name="Kim K."/>
            <person name="Kruchowski S.S."/>
            <person name="Strong C.M."/>
            <person name="Grewal N."/>
            <person name="Goyea E."/>
            <person name="Hou S."/>
            <person name="Levy A."/>
            <person name="Martinka S."/>
            <person name="Mead K."/>
            <person name="McLellan M.D."/>
            <person name="Meyer R."/>
            <person name="Randall-Maher J."/>
            <person name="Tomlinson C."/>
            <person name="Dauphin-Kohlberg S."/>
            <person name="Kozlowicz-Reilly A."/>
            <person name="Shah N."/>
            <person name="Swearengen-Shahid S."/>
            <person name="Snider J."/>
            <person name="Strong J.T."/>
            <person name="Thompson J."/>
            <person name="Yoakum M."/>
            <person name="Leonard S."/>
            <person name="Pearman C."/>
            <person name="Trani L."/>
            <person name="Radionenko M."/>
            <person name="Waligorski J.E."/>
            <person name="Wang C."/>
            <person name="Rock S.M."/>
            <person name="Tin-Wollam A.-M."/>
            <person name="Maupin R."/>
            <person name="Latreille P."/>
            <person name="Wendl M.C."/>
            <person name="Yang S.-P."/>
            <person name="Pohl C."/>
            <person name="Wallis J.W."/>
            <person name="Spieth J."/>
            <person name="Bieri T.A."/>
            <person name="Berkowicz N."/>
            <person name="Nelson J.O."/>
            <person name="Osborne J."/>
            <person name="Ding L."/>
            <person name="Meyer R."/>
            <person name="Sabo A."/>
            <person name="Shotland Y."/>
            <person name="Sinha P."/>
            <person name="Wohldmann P.E."/>
            <person name="Cook L.L."/>
            <person name="Hickenbotham M.T."/>
            <person name="Eldred J."/>
            <person name="Williams D."/>
            <person name="Jones T.A."/>
            <person name="She X."/>
            <person name="Ciccarelli F.D."/>
            <person name="Izaurralde E."/>
            <person name="Taylor J."/>
            <person name="Schmutz J."/>
            <person name="Myers R.M."/>
            <person name="Cox D.R."/>
            <person name="Huang X."/>
            <person name="McPherson J.D."/>
            <person name="Mardis E.R."/>
            <person name="Clifton S.W."/>
            <person name="Warren W.C."/>
            <person name="Chinwalla A.T."/>
            <person name="Eddy S.R."/>
            <person name="Marra M.A."/>
            <person name="Ovcharenko I."/>
            <person name="Furey T.S."/>
            <person name="Miller W."/>
            <person name="Eichler E.E."/>
            <person name="Bork P."/>
            <person name="Suyama M."/>
            <person name="Torrents D."/>
            <person name="Waterston R.H."/>
            <person name="Wilson R.K."/>
        </authorList>
    </citation>
    <scope>NUCLEOTIDE SEQUENCE [LARGE SCALE GENOMIC DNA]</scope>
</reference>
<reference key="4">
    <citation type="submission" date="2005-07" db="EMBL/GenBank/DDBJ databases">
        <authorList>
            <person name="Mural R.J."/>
            <person name="Istrail S."/>
            <person name="Sutton G.G."/>
            <person name="Florea L."/>
            <person name="Halpern A.L."/>
            <person name="Mobarry C.M."/>
            <person name="Lippert R."/>
            <person name="Walenz B."/>
            <person name="Shatkay H."/>
            <person name="Dew I."/>
            <person name="Miller J.R."/>
            <person name="Flanigan M.J."/>
            <person name="Edwards N.J."/>
            <person name="Bolanos R."/>
            <person name="Fasulo D."/>
            <person name="Halldorsson B.V."/>
            <person name="Hannenhalli S."/>
            <person name="Turner R."/>
            <person name="Yooseph S."/>
            <person name="Lu F."/>
            <person name="Nusskern D.R."/>
            <person name="Shue B.C."/>
            <person name="Zheng X.H."/>
            <person name="Zhong F."/>
            <person name="Delcher A.L."/>
            <person name="Huson D.H."/>
            <person name="Kravitz S.A."/>
            <person name="Mouchard L."/>
            <person name="Reinert K."/>
            <person name="Remington K.A."/>
            <person name="Clark A.G."/>
            <person name="Waterman M.S."/>
            <person name="Eichler E.E."/>
            <person name="Adams M.D."/>
            <person name="Hunkapiller M.W."/>
            <person name="Myers E.W."/>
            <person name="Venter J.C."/>
        </authorList>
    </citation>
    <scope>NUCLEOTIDE SEQUENCE [LARGE SCALE GENOMIC DNA]</scope>
</reference>
<reference key="5">
    <citation type="journal article" date="2004" name="Genome Res.">
        <title>The status, quality, and expansion of the NIH full-length cDNA project: the Mammalian Gene Collection (MGC).</title>
        <authorList>
            <consortium name="The MGC Project Team"/>
        </authorList>
    </citation>
    <scope>NUCLEOTIDE SEQUENCE [LARGE SCALE MRNA] (ISOFORM 4)</scope>
    <source>
        <tissue>Bone marrow</tissue>
        <tissue>Brain</tissue>
    </source>
</reference>
<reference key="6">
    <citation type="journal article" date="2004" name="Nat. Genet.">
        <title>Complete sequencing and characterization of 21,243 full-length human cDNAs.</title>
        <authorList>
            <person name="Ota T."/>
            <person name="Suzuki Y."/>
            <person name="Nishikawa T."/>
            <person name="Otsuki T."/>
            <person name="Sugiyama T."/>
            <person name="Irie R."/>
            <person name="Wakamatsu A."/>
            <person name="Hayashi K."/>
            <person name="Sato H."/>
            <person name="Nagai K."/>
            <person name="Kimura K."/>
            <person name="Makita H."/>
            <person name="Sekine M."/>
            <person name="Obayashi M."/>
            <person name="Nishi T."/>
            <person name="Shibahara T."/>
            <person name="Tanaka T."/>
            <person name="Ishii S."/>
            <person name="Yamamoto J."/>
            <person name="Saito K."/>
            <person name="Kawai Y."/>
            <person name="Isono Y."/>
            <person name="Nakamura Y."/>
            <person name="Nagahari K."/>
            <person name="Murakami K."/>
            <person name="Yasuda T."/>
            <person name="Iwayanagi T."/>
            <person name="Wagatsuma M."/>
            <person name="Shiratori A."/>
            <person name="Sudo H."/>
            <person name="Hosoiri T."/>
            <person name="Kaku Y."/>
            <person name="Kodaira H."/>
            <person name="Kondo H."/>
            <person name="Sugawara M."/>
            <person name="Takahashi M."/>
            <person name="Kanda K."/>
            <person name="Yokoi T."/>
            <person name="Furuya T."/>
            <person name="Kikkawa E."/>
            <person name="Omura Y."/>
            <person name="Abe K."/>
            <person name="Kamihara K."/>
            <person name="Katsuta N."/>
            <person name="Sato K."/>
            <person name="Tanikawa M."/>
            <person name="Yamazaki M."/>
            <person name="Ninomiya K."/>
            <person name="Ishibashi T."/>
            <person name="Yamashita H."/>
            <person name="Murakawa K."/>
            <person name="Fujimori K."/>
            <person name="Tanai H."/>
            <person name="Kimata M."/>
            <person name="Watanabe M."/>
            <person name="Hiraoka S."/>
            <person name="Chiba Y."/>
            <person name="Ishida S."/>
            <person name="Ono Y."/>
            <person name="Takiguchi S."/>
            <person name="Watanabe S."/>
            <person name="Yosida M."/>
            <person name="Hotuta T."/>
            <person name="Kusano J."/>
            <person name="Kanehori K."/>
            <person name="Takahashi-Fujii A."/>
            <person name="Hara H."/>
            <person name="Tanase T.-O."/>
            <person name="Nomura Y."/>
            <person name="Togiya S."/>
            <person name="Komai F."/>
            <person name="Hara R."/>
            <person name="Takeuchi K."/>
            <person name="Arita M."/>
            <person name="Imose N."/>
            <person name="Musashino K."/>
            <person name="Yuuki H."/>
            <person name="Oshima A."/>
            <person name="Sasaki N."/>
            <person name="Aotsuka S."/>
            <person name="Yoshikawa Y."/>
            <person name="Matsunawa H."/>
            <person name="Ichihara T."/>
            <person name="Shiohata N."/>
            <person name="Sano S."/>
            <person name="Moriya S."/>
            <person name="Momiyama H."/>
            <person name="Satoh N."/>
            <person name="Takami S."/>
            <person name="Terashima Y."/>
            <person name="Suzuki O."/>
            <person name="Nakagawa S."/>
            <person name="Senoh A."/>
            <person name="Mizoguchi H."/>
            <person name="Goto Y."/>
            <person name="Shimizu F."/>
            <person name="Wakebe H."/>
            <person name="Hishigaki H."/>
            <person name="Watanabe T."/>
            <person name="Sugiyama A."/>
            <person name="Takemoto M."/>
            <person name="Kawakami B."/>
            <person name="Yamazaki M."/>
            <person name="Watanabe K."/>
            <person name="Kumagai A."/>
            <person name="Itakura S."/>
            <person name="Fukuzumi Y."/>
            <person name="Fujimori Y."/>
            <person name="Komiyama M."/>
            <person name="Tashiro H."/>
            <person name="Tanigami A."/>
            <person name="Fujiwara T."/>
            <person name="Ono T."/>
            <person name="Yamada K."/>
            <person name="Fujii Y."/>
            <person name="Ozaki K."/>
            <person name="Hirao M."/>
            <person name="Ohmori Y."/>
            <person name="Kawabata A."/>
            <person name="Hikiji T."/>
            <person name="Kobatake N."/>
            <person name="Inagaki H."/>
            <person name="Ikema Y."/>
            <person name="Okamoto S."/>
            <person name="Okitani R."/>
            <person name="Kawakami T."/>
            <person name="Noguchi S."/>
            <person name="Itoh T."/>
            <person name="Shigeta K."/>
            <person name="Senba T."/>
            <person name="Matsumura K."/>
            <person name="Nakajima Y."/>
            <person name="Mizuno T."/>
            <person name="Morinaga M."/>
            <person name="Sasaki M."/>
            <person name="Togashi T."/>
            <person name="Oyama M."/>
            <person name="Hata H."/>
            <person name="Watanabe M."/>
            <person name="Komatsu T."/>
            <person name="Mizushima-Sugano J."/>
            <person name="Satoh T."/>
            <person name="Shirai Y."/>
            <person name="Takahashi Y."/>
            <person name="Nakagawa K."/>
            <person name="Okumura K."/>
            <person name="Nagase T."/>
            <person name="Nomura N."/>
            <person name="Kikuchi H."/>
            <person name="Masuho Y."/>
            <person name="Yamashita R."/>
            <person name="Nakai K."/>
            <person name="Yada T."/>
            <person name="Nakamura Y."/>
            <person name="Ohara O."/>
            <person name="Isogai T."/>
            <person name="Sugano S."/>
        </authorList>
    </citation>
    <scope>NUCLEOTIDE SEQUENCE [LARGE SCALE MRNA] OF 91-1258 (ISOFORM 5)</scope>
    <scope>NUCLEOTIDE SEQUENCE [LARGE SCALE MRNA] OF 865-1258</scope>
</reference>
<reference key="7">
    <citation type="journal article" date="1999" name="Int. J. Cancer">
        <title>Antigens recognized by autologous antibody in patients with renal-cell carcinoma.</title>
        <authorList>
            <person name="Scanlan M.J."/>
            <person name="Gordan J.D."/>
            <person name="Williamson B."/>
            <person name="Stockert E."/>
            <person name="Bander N.H."/>
            <person name="Jongeneel C.V."/>
            <person name="Gure A.O."/>
            <person name="Jaeger D."/>
            <person name="Jaeger E."/>
            <person name="Knuth A."/>
            <person name="Chen Y.-T."/>
            <person name="Old L.J."/>
        </authorList>
    </citation>
    <scope>NUCLEOTIDE SEQUENCE [MRNA] OF 444-1258 (ISOFORM 2)</scope>
    <scope>IDENTIFICATION AS A RENAL CANCER ANTIGEN</scope>
    <source>
        <tissue>Renal cell carcinoma</tissue>
    </source>
</reference>
<reference key="8">
    <citation type="journal article" date="2004" name="Cancer Res.">
        <title>NIMA-related protein kinase 1 is involved early in the ionizing radiation-induced DNA damage response.</title>
        <authorList>
            <person name="Polci R."/>
            <person name="Peng A."/>
            <person name="Chen P.L."/>
            <person name="Riley D.J."/>
            <person name="Chen Y."/>
        </authorList>
    </citation>
    <scope>SUBCELLULAR LOCATION</scope>
    <scope>FUNCTION</scope>
</reference>
<reference key="9">
    <citation type="journal article" date="2008" name="Cell Cycle">
        <title>Never-in-mitosis related kinase 1 functions in DNA damage response and checkpoint control.</title>
        <authorList>
            <person name="Chen Y."/>
            <person name="Chen P.L."/>
            <person name="Chen C.F."/>
            <person name="Jiang X."/>
            <person name="Riley D.J."/>
        </authorList>
    </citation>
    <scope>SUBCELLULAR LOCATION</scope>
    <scope>FUNCTION</scope>
</reference>
<reference key="10">
    <citation type="journal article" date="2008" name="Mol. Cell">
        <title>Kinase-selective enrichment enables quantitative phosphoproteomics of the kinome across the cell cycle.</title>
        <authorList>
            <person name="Daub H."/>
            <person name="Olsen J.V."/>
            <person name="Bairlein M."/>
            <person name="Gnad F."/>
            <person name="Oppermann F.S."/>
            <person name="Korner R."/>
            <person name="Greff Z."/>
            <person name="Keri G."/>
            <person name="Stemmann O."/>
            <person name="Mann M."/>
        </authorList>
    </citation>
    <scope>IDENTIFICATION BY MASS SPECTROMETRY [LARGE SCALE ANALYSIS]</scope>
    <source>
        <tissue>Cervix carcinoma</tissue>
    </source>
</reference>
<reference key="11">
    <citation type="journal article" date="2008" name="Proc. Natl. Acad. Sci. U.S.A.">
        <title>A quantitative atlas of mitotic phosphorylation.</title>
        <authorList>
            <person name="Dephoure N."/>
            <person name="Zhou C."/>
            <person name="Villen J."/>
            <person name="Beausoleil S.A."/>
            <person name="Bakalarski C.E."/>
            <person name="Elledge S.J."/>
            <person name="Gygi S.P."/>
        </authorList>
    </citation>
    <scope>IDENTIFICATION BY MASS SPECTROMETRY [LARGE SCALE ANALYSIS]</scope>
    <source>
        <tissue>Cervix carcinoma</tissue>
    </source>
</reference>
<reference key="12">
    <citation type="journal article" date="2009" name="Mol. Cell. Proteomics">
        <title>Large-scale proteomics analysis of the human kinome.</title>
        <authorList>
            <person name="Oppermann F.S."/>
            <person name="Gnad F."/>
            <person name="Olsen J.V."/>
            <person name="Hornberger R."/>
            <person name="Greff Z."/>
            <person name="Keri G."/>
            <person name="Mann M."/>
            <person name="Daub H."/>
        </authorList>
    </citation>
    <scope>PHOSPHORYLATION [LARGE SCALE ANALYSIS] AT SER-414; SER-418; SER-428; SER-653; SER-798; SER-834; SER-868 AND SER-881</scope>
    <scope>IDENTIFICATION BY MASS SPECTROMETRY [LARGE SCALE ANALYSIS]</scope>
</reference>
<reference key="13">
    <citation type="journal article" date="2010" name="Biochem. Biophys. Res. Commun.">
        <title>Phosphorylation by Nek1 regulates opening and closing of voltage dependent anion channel 1.</title>
        <authorList>
            <person name="Chen Y."/>
            <person name="Gaczynska M."/>
            <person name="Osmulski P."/>
            <person name="Polci R."/>
            <person name="Riley D.J."/>
        </authorList>
    </citation>
    <scope>FUNCTION IN PHOSPHORYLATION OF VDAC1</scope>
    <scope>CATALYTIC ACTIVITY</scope>
</reference>
<reference key="14">
    <citation type="journal article" date="2011" name="Am. J. Hum. Genet.">
        <title>NEK1 mutations cause short-rib polydactyly syndrome type majewski.</title>
        <authorList>
            <person name="Thiel C."/>
            <person name="Kessler K."/>
            <person name="Giessl A."/>
            <person name="Dimmler A."/>
            <person name="Shalev S.A."/>
            <person name="von der Haar S."/>
            <person name="Zenker M."/>
            <person name="Zahnleiter D."/>
            <person name="Stoess H."/>
            <person name="Beinder E."/>
            <person name="Abou Jamra R."/>
            <person name="Ekici A.B."/>
            <person name="Schroeder-Kress N."/>
            <person name="Aigner T."/>
            <person name="Kirchner T."/>
            <person name="Reis A."/>
            <person name="Brandstaetter J.H."/>
            <person name="Rauch A."/>
        </authorList>
    </citation>
    <scope>FUNCTION</scope>
    <scope>TISSUE SPECIFICITY</scope>
    <scope>SUBCELLULAR LOCATION</scope>
    <scope>INVOLVEMENT IN DIGENIC SHORT-RIB THORACIC DYSPLASIA 3/6 WITH POLYDACTYLY</scope>
</reference>
<reference key="15">
    <citation type="journal article" date="2011" name="BMC Syst. Biol.">
        <title>Initial characterization of the human central proteome.</title>
        <authorList>
            <person name="Burkard T.R."/>
            <person name="Planyavsky M."/>
            <person name="Kaupe I."/>
            <person name="Breitwieser F.P."/>
            <person name="Buerckstuemmer T."/>
            <person name="Bennett K.L."/>
            <person name="Superti-Furga G."/>
            <person name="Colinge J."/>
        </authorList>
    </citation>
    <scope>IDENTIFICATION BY MASS SPECTROMETRY [LARGE SCALE ANALYSIS]</scope>
</reference>
<reference key="16">
    <citation type="journal article" date="2013" name="J. Proteome Res.">
        <title>Toward a comprehensive characterization of a human cancer cell phosphoproteome.</title>
        <authorList>
            <person name="Zhou H."/>
            <person name="Di Palma S."/>
            <person name="Preisinger C."/>
            <person name="Peng M."/>
            <person name="Polat A.N."/>
            <person name="Heck A.J."/>
            <person name="Mohammed S."/>
        </authorList>
    </citation>
    <scope>PHOSPHORYLATION [LARGE SCALE ANALYSIS] AT THR-156; SER-428; THR-661; SER-664; SER-868; SER-881 AND SER-1052</scope>
    <scope>IDENTIFICATION BY MASS SPECTROMETRY [LARGE SCALE ANALYSIS]</scope>
    <source>
        <tissue>Erythroleukemia</tissue>
    </source>
</reference>
<reference key="17">
    <citation type="journal article" date="2014" name="J. Proteomics">
        <title>An enzyme assisted RP-RPLC approach for in-depth analysis of human liver phosphoproteome.</title>
        <authorList>
            <person name="Bian Y."/>
            <person name="Song C."/>
            <person name="Cheng K."/>
            <person name="Dong M."/>
            <person name="Wang F."/>
            <person name="Huang J."/>
            <person name="Sun D."/>
            <person name="Wang L."/>
            <person name="Ye M."/>
            <person name="Zou H."/>
        </authorList>
    </citation>
    <scope>PHOSPHORYLATION [LARGE SCALE ANALYSIS] AT SER-1052</scope>
    <scope>IDENTIFICATION BY MASS SPECTROMETRY [LARGE SCALE ANALYSIS]</scope>
    <source>
        <tissue>Liver</tissue>
    </source>
</reference>
<reference key="18">
    <citation type="journal article" date="2015" name="Nat. Cell Biol.">
        <title>An siRNA-based functional genomics screen for the identification of regulators of ciliogenesis and ciliopathy genes.</title>
        <authorList>
            <consortium name="UK10K Consortium"/>
            <consortium name="University of Washington Center for Mendelian Genomics"/>
            <person name="Wheway G."/>
            <person name="Schmidts M."/>
            <person name="Mans D.A."/>
            <person name="Szymanska K."/>
            <person name="Nguyen T.M."/>
            <person name="Racher H."/>
            <person name="Phelps I.G."/>
            <person name="Toedt G."/>
            <person name="Kennedy J."/>
            <person name="Wunderlich K.A."/>
            <person name="Sorusch N."/>
            <person name="Abdelhamed Z.A."/>
            <person name="Natarajan S."/>
            <person name="Herridge W."/>
            <person name="van Reeuwijk J."/>
            <person name="Horn N."/>
            <person name="Boldt K."/>
            <person name="Parry D.A."/>
            <person name="Letteboer S.J."/>
            <person name="Roosing S."/>
            <person name="Adams M."/>
            <person name="Bell S.M."/>
            <person name="Bond J."/>
            <person name="Higgins J."/>
            <person name="Morrison E.E."/>
            <person name="Tomlinson D.C."/>
            <person name="Slaats G.G."/>
            <person name="van Dam T.J."/>
            <person name="Huang L."/>
            <person name="Kessler K."/>
            <person name="Giessl A."/>
            <person name="Logan C.V."/>
            <person name="Boyle E.A."/>
            <person name="Shendure J."/>
            <person name="Anazi S."/>
            <person name="Aldahmesh M."/>
            <person name="Al Hazzaa S."/>
            <person name="Hegele R.A."/>
            <person name="Ober C."/>
            <person name="Frosk P."/>
            <person name="Mhanni A.A."/>
            <person name="Chodirker B.N."/>
            <person name="Chudley A.E."/>
            <person name="Lamont R."/>
            <person name="Bernier F.P."/>
            <person name="Beaulieu C.L."/>
            <person name="Gordon P."/>
            <person name="Pon R.T."/>
            <person name="Donahue C."/>
            <person name="Barkovich A.J."/>
            <person name="Wolf L."/>
            <person name="Toomes C."/>
            <person name="Thiel C.T."/>
            <person name="Boycott K.M."/>
            <person name="McKibbin M."/>
            <person name="Inglehearn C.F."/>
            <person name="Stewart F."/>
            <person name="Omran H."/>
            <person name="Huynen M.A."/>
            <person name="Sergouniotis P.I."/>
            <person name="Alkuraya F.S."/>
            <person name="Parboosingh J.S."/>
            <person name="Innes A.M."/>
            <person name="Willoughby C.E."/>
            <person name="Giles R.H."/>
            <person name="Webster A.R."/>
            <person name="Ueffing M."/>
            <person name="Blacque O."/>
            <person name="Gleeson J.G."/>
            <person name="Wolfrum U."/>
            <person name="Beales P.L."/>
            <person name="Gibson T."/>
            <person name="Doherty D."/>
            <person name="Mitchison H.M."/>
            <person name="Roepman R."/>
            <person name="Johnson C.A."/>
        </authorList>
    </citation>
    <scope>IDENTIFICATION BY MASS SPECTROMETRY</scope>
    <scope>IDENTIFICATION IN A COMPLEX WITH CFAP410 AND SPATA7 BY MASS SPECTROMETRY</scope>
    <scope>INTERACTION WITH CFAP410</scope>
</reference>
<reference key="19">
    <citation type="journal article" date="2016" name="Eur. J. Hum. Genet.">
        <title>Compound heterozygous NEK1 variants in two siblings with oral-facial-digital syndrome type II (Mohr syndrome).</title>
        <authorList>
            <person name="Monroe G.R."/>
            <person name="Kappen I.F."/>
            <person name="Stokman M.F."/>
            <person name="Terhal P.A."/>
            <person name="van den Boogaard M.H."/>
            <person name="Savelberg S.M."/>
            <person name="van der Veken L.T."/>
            <person name="van Es R.J."/>
            <person name="Lens S.M."/>
            <person name="Hengeveld R.C."/>
            <person name="Creton M.A."/>
            <person name="Janssen N.G."/>
            <person name="Mink van der Molen A.B."/>
            <person name="Ebbeling M.B."/>
            <person name="Giles R.H."/>
            <person name="Knoers N.V."/>
            <person name="van Haaften G."/>
        </authorList>
    </citation>
    <scope>INVOLVEMENT IN OFD2</scope>
    <scope>VARIANTS OFD2 THR-155 AND 409-TRP--GLU-1258 DEL</scope>
</reference>
<reference key="20">
    <citation type="journal article" date="2007" name="Nature">
        <title>Patterns of somatic mutation in human cancer genomes.</title>
        <authorList>
            <person name="Greenman C."/>
            <person name="Stephens P."/>
            <person name="Smith R."/>
            <person name="Dalgliesh G.L."/>
            <person name="Hunter C."/>
            <person name="Bignell G."/>
            <person name="Davies H."/>
            <person name="Teague J."/>
            <person name="Butler A."/>
            <person name="Stevens C."/>
            <person name="Edkins S."/>
            <person name="O'Meara S."/>
            <person name="Vastrik I."/>
            <person name="Schmidt E.E."/>
            <person name="Avis T."/>
            <person name="Barthorpe S."/>
            <person name="Bhamra G."/>
            <person name="Buck G."/>
            <person name="Choudhury B."/>
            <person name="Clements J."/>
            <person name="Cole J."/>
            <person name="Dicks E."/>
            <person name="Forbes S."/>
            <person name="Gray K."/>
            <person name="Halliday K."/>
            <person name="Harrison R."/>
            <person name="Hills K."/>
            <person name="Hinton J."/>
            <person name="Jenkinson A."/>
            <person name="Jones D."/>
            <person name="Menzies A."/>
            <person name="Mironenko T."/>
            <person name="Perry J."/>
            <person name="Raine K."/>
            <person name="Richardson D."/>
            <person name="Shepherd R."/>
            <person name="Small A."/>
            <person name="Tofts C."/>
            <person name="Varian J."/>
            <person name="Webb T."/>
            <person name="West S."/>
            <person name="Widaa S."/>
            <person name="Yates A."/>
            <person name="Cahill D.P."/>
            <person name="Louis D.N."/>
            <person name="Goldstraw P."/>
            <person name="Nicholson A.G."/>
            <person name="Brasseur F."/>
            <person name="Looijenga L."/>
            <person name="Weber B.L."/>
            <person name="Chiew Y.-E."/>
            <person name="DeFazio A."/>
            <person name="Greaves M.F."/>
            <person name="Green A.R."/>
            <person name="Campbell P."/>
            <person name="Birney E."/>
            <person name="Easton D.F."/>
            <person name="Chenevix-Trench G."/>
            <person name="Tan M.-H."/>
            <person name="Khoo S.K."/>
            <person name="Teh B.T."/>
            <person name="Yuen S.T."/>
            <person name="Leung S.Y."/>
            <person name="Wooster R."/>
            <person name="Futreal P.A."/>
            <person name="Stratton M.R."/>
        </authorList>
    </citation>
    <scope>VARIANTS [LARGE SCALE ANALYSIS] PHE-10; LYS-25; VAL-76; PRO-294; GLY-355; VAL-463; THR-598; GLY-724; ASN-745; GLU-883 AND ASN-1180</scope>
</reference>
<reference key="21">
    <citation type="journal article" date="2012" name="J. Med. Genet.">
        <title>NEK1 and DYNC2H1 are both involved in short rib polydactyly Majewski type but not in Beemer Langer cases.</title>
        <authorList>
            <person name="El Hokayem J."/>
            <person name="Huber C."/>
            <person name="Couve A."/>
            <person name="Aziza J."/>
            <person name="Baujat G."/>
            <person name="Bouvier R."/>
            <person name="Cavalcanti D.P."/>
            <person name="Collins F.A."/>
            <person name="Cordier M.P."/>
            <person name="Delezoide A.L."/>
            <person name="Gonzales M."/>
            <person name="Johnson D."/>
            <person name="Le Merrer M."/>
            <person name="Levy-Mozziconacci A."/>
            <person name="Loget P."/>
            <person name="Martin-Coignard D."/>
            <person name="Martinovic J."/>
            <person name="Mortier G.R."/>
            <person name="Perez M.J."/>
            <person name="Roume J."/>
            <person name="Scarano G."/>
            <person name="Munnich A."/>
            <person name="Cormier-Daire V."/>
        </authorList>
    </citation>
    <scope>VARIANTS SRTD6 ARG-145 AND SER-253</scope>
</reference>
<reference key="22">
    <citation type="journal article" date="2016" name="Brain">
        <title>NEK1 mutations in familial amyotrophic lateral sclerosis.</title>
        <authorList>
            <person name="Brenner D."/>
            <person name="Mueller K."/>
            <person name="Wieland T."/>
            <person name="Weydt P."/>
            <person name="Boehm S."/>
            <person name="Lule D."/>
            <person name="Huebers A."/>
            <person name="Neuwirth C."/>
            <person name="Weber M."/>
            <person name="Borck G."/>
            <person name="Wahlqvist M."/>
            <person name="Danzer K.M."/>
            <person name="Volk A.E."/>
            <person name="Meitinger T."/>
            <person name="Strom T.M."/>
            <person name="Otto M."/>
            <person name="Kassubek J."/>
            <person name="Ludolph A.C."/>
            <person name="Andersen P.M."/>
            <person name="Weishaupt J.H."/>
        </authorList>
    </citation>
    <scope>INVOLVEMENT IN ALS24</scope>
    <scope>VARIANTS 784-ARG--GLU-1258 DEL AND 1008-SER--GLU-1258 DEL</scope>
</reference>
<reference key="23">
    <citation type="journal article" date="2016" name="Nat. Genet.">
        <title>NEK1 variants confer susceptibility to amyotrophic lateral sclerosis.</title>
        <authorList>
            <person name="Kenna K.P."/>
            <person name="van Doormaal P.T."/>
            <person name="Dekker A.M."/>
            <person name="Ticozzi N."/>
            <person name="Kenna B.J."/>
            <person name="Diekstra F.P."/>
            <person name="van Rheenen W."/>
            <person name="van Eijk K.R."/>
            <person name="Jones A.R."/>
            <person name="Keagle P."/>
            <person name="Shatunov A."/>
            <person name="Sproviero W."/>
            <person name="Smith B.N."/>
            <person name="van Es M.A."/>
            <person name="Topp S.D."/>
            <person name="Kenna A."/>
            <person name="Miller J.W."/>
            <person name="Fallini C."/>
            <person name="Tiloca C."/>
            <person name="McLaughlin R.L."/>
            <person name="Vance C."/>
            <person name="Troakes C."/>
            <person name="Colombrita C."/>
            <person name="Mora G."/>
            <person name="Calvo A."/>
            <person name="Verde F."/>
            <person name="Al-Sarraj S."/>
            <person name="King A."/>
            <person name="Calini D."/>
            <person name="de Belleroche J."/>
            <person name="Baas F."/>
            <person name="van der Kooi A.J."/>
            <person name="de Visser M."/>
            <person name="Ten Asbroek A.L."/>
            <person name="Sapp P.C."/>
            <person name="McKenna-Yasek D."/>
            <person name="Polak M."/>
            <person name="Asress S."/>
            <person name="Munoz-Blanco J.L."/>
            <person name="Strom T.M."/>
            <person name="Meitinger T."/>
            <person name="Morrison K.E."/>
            <person name="Lauria G."/>
            <person name="Williams K.L."/>
            <person name="Leigh P.N."/>
            <person name="Nicholson G.A."/>
            <person name="Blair I.P."/>
            <person name="Leblond C.S."/>
            <person name="Dion P.A."/>
            <person name="Rouleau G.A."/>
            <person name="Pall H."/>
            <person name="Shaw P.J."/>
            <person name="Turner M.R."/>
            <person name="Talbot K."/>
            <person name="Taroni F."/>
            <person name="Boylan K.B."/>
            <person name="Van Blitterswijk M."/>
            <person name="Rademakers R."/>
            <person name="Esteban-Perez J."/>
            <person name="Garcia-Redondo A."/>
            <person name="Van Damme P."/>
            <person name="Robberecht W."/>
            <person name="Chio A."/>
            <person name="Gellera C."/>
            <person name="Drepper C."/>
            <person name="Sendtner M."/>
            <person name="Ratti A."/>
            <person name="Glass J.D."/>
            <person name="Mora J.S."/>
            <person name="Basak N.A."/>
            <person name="Hardiman O."/>
            <person name="Ludolph A.C."/>
            <person name="Andersen P.M."/>
            <person name="Weishaupt J.H."/>
            <person name="Brown R.H. Jr."/>
            <person name="Al-Chalabi A."/>
            <person name="Silani V."/>
            <person name="Shaw C.E."/>
            <person name="van den Berg L.H."/>
            <person name="Veldink J.H."/>
            <person name="Landers J.E."/>
        </authorList>
    </citation>
    <scope>INVOLVEMENT IN ALS24</scope>
    <scope>VARIANTS HIS-261 AND 550-ARG--GLU-1258 DEL</scope>
</reference>
<keyword id="KW-0002">3D-structure</keyword>
<keyword id="KW-0025">Alternative splicing</keyword>
<keyword id="KW-0036">Amyotrophic lateral sclerosis</keyword>
<keyword id="KW-0067">ATP-binding</keyword>
<keyword id="KW-0131">Cell cycle</keyword>
<keyword id="KW-0132">Cell division</keyword>
<keyword id="KW-1186">Ciliopathy</keyword>
<keyword id="KW-0970">Cilium biogenesis/degradation</keyword>
<keyword id="KW-0963">Cytoplasm</keyword>
<keyword id="KW-0206">Cytoskeleton</keyword>
<keyword id="KW-0418">Kinase</keyword>
<keyword id="KW-0460">Magnesium</keyword>
<keyword id="KW-0479">Metal-binding</keyword>
<keyword id="KW-0498">Mitosis</keyword>
<keyword id="KW-0523">Neurodegeneration</keyword>
<keyword id="KW-0547">Nucleotide-binding</keyword>
<keyword id="KW-0539">Nucleus</keyword>
<keyword id="KW-0597">Phosphoprotein</keyword>
<keyword id="KW-1267">Proteomics identification</keyword>
<keyword id="KW-1185">Reference proteome</keyword>
<keyword id="KW-0723">Serine/threonine-protein kinase</keyword>
<keyword id="KW-0808">Transferase</keyword>
<keyword id="KW-0829">Tyrosine-protein kinase</keyword>
<feature type="chain" id="PRO_0000086418" description="Serine/threonine-protein kinase Nek1">
    <location>
        <begin position="1"/>
        <end position="1258"/>
    </location>
</feature>
<feature type="domain" description="Protein kinase" evidence="3">
    <location>
        <begin position="4"/>
        <end position="258"/>
    </location>
</feature>
<feature type="region of interest" description="Disordered" evidence="5">
    <location>
        <begin position="330"/>
        <end position="360"/>
    </location>
</feature>
<feature type="region of interest" description="Disordered" evidence="5">
    <location>
        <begin position="578"/>
        <end position="600"/>
    </location>
</feature>
<feature type="region of interest" description="Disordered" evidence="5">
    <location>
        <begin position="648"/>
        <end position="669"/>
    </location>
</feature>
<feature type="region of interest" description="Disordered" evidence="5">
    <location>
        <begin position="685"/>
        <end position="704"/>
    </location>
</feature>
<feature type="region of interest" description="Disordered" evidence="5">
    <location>
        <begin position="1118"/>
        <end position="1171"/>
    </location>
</feature>
<feature type="compositionally biased region" description="Basic and acidic residues" evidence="5">
    <location>
        <begin position="344"/>
        <end position="360"/>
    </location>
</feature>
<feature type="compositionally biased region" description="Basic and acidic residues" evidence="5">
    <location>
        <begin position="579"/>
        <end position="591"/>
    </location>
</feature>
<feature type="compositionally biased region" description="Basic and acidic residues" evidence="5">
    <location>
        <begin position="691"/>
        <end position="700"/>
    </location>
</feature>
<feature type="active site" description="Proton acceptor" evidence="3 4">
    <location>
        <position position="128"/>
    </location>
</feature>
<feature type="binding site" evidence="3">
    <location>
        <begin position="10"/>
        <end position="18"/>
    </location>
    <ligand>
        <name>ATP</name>
        <dbReference type="ChEBI" id="CHEBI:30616"/>
    </ligand>
</feature>
<feature type="binding site" evidence="3">
    <location>
        <position position="33"/>
    </location>
    <ligand>
        <name>ATP</name>
        <dbReference type="ChEBI" id="CHEBI:30616"/>
    </ligand>
</feature>
<feature type="modified residue" description="Phosphothreonine" evidence="24">
    <location>
        <position position="156"/>
    </location>
</feature>
<feature type="modified residue" description="Phosphothreonine; by autocatalysis" evidence="1">
    <location>
        <position position="162"/>
    </location>
</feature>
<feature type="modified residue" description="Phosphoserine" evidence="23">
    <location>
        <position position="414"/>
    </location>
</feature>
<feature type="modified residue" description="Phosphoserine" evidence="23">
    <location>
        <position position="418"/>
    </location>
</feature>
<feature type="modified residue" description="Phosphoserine" evidence="23 24">
    <location>
        <position position="428"/>
    </location>
</feature>
<feature type="modified residue" description="Phosphoserine" evidence="2">
    <location>
        <position position="438"/>
    </location>
</feature>
<feature type="modified residue" description="Phosphoserine" evidence="23">
    <location>
        <position position="653"/>
    </location>
</feature>
<feature type="modified residue" description="Phosphothreonine" evidence="24">
    <location>
        <position position="661"/>
    </location>
</feature>
<feature type="modified residue" description="Phosphoserine" evidence="24">
    <location>
        <position position="664"/>
    </location>
</feature>
<feature type="modified residue" description="Phosphoserine" evidence="23">
    <location>
        <position position="798"/>
    </location>
</feature>
<feature type="modified residue" description="Phosphoserine" evidence="23">
    <location>
        <position position="834"/>
    </location>
</feature>
<feature type="modified residue" description="Phosphoserine" evidence="23 24">
    <location>
        <position position="868"/>
    </location>
</feature>
<feature type="modified residue" description="Phosphoserine" evidence="23 24">
    <location>
        <position position="881"/>
    </location>
</feature>
<feature type="modified residue" description="Phosphoserine" evidence="24 25">
    <location>
        <position position="1052"/>
    </location>
</feature>
<feature type="modified residue" description="Phosphoserine" evidence="2">
    <location>
        <position position="1126"/>
    </location>
</feature>
<feature type="splice variant" id="VSP_035435" description="In isoform 4." evidence="19">
    <location>
        <begin position="398"/>
        <end position="422"/>
    </location>
</feature>
<feature type="splice variant" id="VSP_035436" description="In isoform 4 and isoform 6." evidence="19">
    <location>
        <begin position="477"/>
        <end position="520"/>
    </location>
</feature>
<feature type="splice variant" id="VSP_004870" description="In isoform 2." evidence="17">
    <location>
        <begin position="478"/>
        <end position="521"/>
    </location>
</feature>
<feature type="splice variant" id="VSP_035437" description="In isoform 5." evidence="18">
    <original>QKGQLA</original>
    <variation>LDCDDP</variation>
    <location>
        <begin position="522"/>
        <end position="527"/>
    </location>
</feature>
<feature type="splice variant" id="VSP_035438" description="In isoform 5." evidence="18">
    <location>
        <begin position="528"/>
        <end position="1258"/>
    </location>
</feature>
<feature type="splice variant" id="VSP_035439" description="In isoform 3 and isoform 6." evidence="20">
    <original>M</original>
    <variation>MGILQNLAAMYGGRPSSSRGGKPRNKEEE</variation>
    <location>
        <position position="555"/>
    </location>
</feature>
<feature type="sequence variant" id="VAR_040900" description="In dbSNP:rs34214559." evidence="7">
    <original>I</original>
    <variation>F</variation>
    <location>
        <position position="10"/>
    </location>
</feature>
<feature type="sequence variant" id="VAR_040901" description="In a lung large cell carcinoma sample; somatic mutation." evidence="7">
    <original>E</original>
    <variation>K</variation>
    <location>
        <position position="25"/>
    </location>
</feature>
<feature type="sequence variant" id="VAR_040902" description="In dbSNP:rs35093214." evidence="7">
    <original>L</original>
    <variation>V</variation>
    <location>
        <position position="76"/>
    </location>
</feature>
<feature type="sequence variant" id="VAR_069617" description="In SRTD6; dbSNP:rs431905508." evidence="12">
    <original>G</original>
    <variation>R</variation>
    <location>
        <position position="145"/>
    </location>
</feature>
<feature type="sequence variant" id="VAR_089300" description="In OFD2; uncertain significance; the nucleotide substitution creating this missense variant may predominantly result in aberrant splicing, with skipping of exon 6 and creation of a premature stop codon, possibly leading to nonsense-mediated mRNA decay." evidence="16">
    <original>S</original>
    <variation>T</variation>
    <location>
        <position position="155"/>
    </location>
</feature>
<feature type="sequence variant" id="VAR_069618" description="In SRTD6." evidence="12">
    <original>L</original>
    <variation>S</variation>
    <location>
        <position position="253"/>
    </location>
</feature>
<feature type="sequence variant" id="VAR_080694" description="Risk factor for ALS24; dbSNP:rs200161705." evidence="15">
    <original>R</original>
    <variation>H</variation>
    <location>
        <position position="261"/>
    </location>
</feature>
<feature type="sequence variant" id="VAR_040903" description="In a lung adenocarcinoma sample; somatic mutation." evidence="7">
    <original>A</original>
    <variation>P</variation>
    <location>
        <position position="294"/>
    </location>
</feature>
<feature type="sequence variant" id="VAR_040904" description="In dbSNP:rs35763578." evidence="7">
    <original>R</original>
    <variation>G</variation>
    <location>
        <position position="355"/>
    </location>
</feature>
<feature type="sequence variant" id="VAR_089301" description="In OFD2; uncertain significance; the nucleotide substitution creating this nonsense variant may predominantly result in aberrant splicing." evidence="16">
    <location>
        <begin position="409"/>
        <end position="1258"/>
    </location>
</feature>
<feature type="sequence variant" id="VAR_040905" description="In dbSNP:rs34540355." evidence="7">
    <original>A</original>
    <variation>V</variation>
    <location>
        <position position="463"/>
    </location>
</feature>
<feature type="sequence variant" id="VAR_080695" description="Risk factor for ALS24." evidence="15">
    <location>
        <begin position="550"/>
        <end position="1258"/>
    </location>
</feature>
<feature type="sequence variant" id="VAR_046486" description="In dbSNP:rs33933790." evidence="7">
    <original>A</original>
    <variation>T</variation>
    <location>
        <position position="598"/>
    </location>
</feature>
<feature type="sequence variant" id="VAR_061743" description="In dbSNP:rs34324114.">
    <original>N</original>
    <variation>K</variation>
    <location>
        <position position="717"/>
    </location>
</feature>
<feature type="sequence variant" id="VAR_051651" description="In dbSNP:rs34099167." evidence="7 8">
    <original>E</original>
    <variation>G</variation>
    <location>
        <position position="724"/>
    </location>
</feature>
<feature type="sequence variant" id="VAR_040906" evidence="7">
    <original>K</original>
    <variation>N</variation>
    <location>
        <position position="745"/>
    </location>
</feature>
<feature type="sequence variant" id="VAR_080696" description="Risk factor for ALS24." evidence="14">
    <location>
        <begin position="784"/>
        <end position="1258"/>
    </location>
</feature>
<feature type="sequence variant" id="VAR_046488" description="In dbSNP:rs6828134." evidence="7">
    <original>Q</original>
    <variation>E</variation>
    <location>
        <position position="883"/>
    </location>
</feature>
<feature type="sequence variant" id="VAR_080697" description="Risk factor for ALS24." evidence="14">
    <location>
        <begin position="1008"/>
        <end position="1258"/>
    </location>
</feature>
<feature type="sequence variant" id="VAR_046489" description="In dbSNP:rs35503975." evidence="7">
    <original>D</original>
    <variation>N</variation>
    <location>
        <position position="1180"/>
    </location>
</feature>
<feature type="sequence conflict" description="In Ref. 2; CAI45943." evidence="21" ref="2">
    <original>N</original>
    <variation>D</variation>
    <location>
        <position position="250"/>
    </location>
</feature>
<feature type="sequence conflict" description="In Ref. 2; CAI45943." evidence="21" ref="2">
    <original>R</original>
    <variation>RK</variation>
    <location>
        <position position="602"/>
    </location>
</feature>
<feature type="sequence conflict" description="In Ref. 7; AAD42879." evidence="21" ref="7">
    <original>G</original>
    <variation>E</variation>
    <location>
        <position position="1232"/>
    </location>
</feature>
<feature type="strand" evidence="26">
    <location>
        <begin position="4"/>
        <end position="9"/>
    </location>
</feature>
<feature type="strand" evidence="26">
    <location>
        <begin position="18"/>
        <end position="23"/>
    </location>
</feature>
<feature type="turn" evidence="26">
    <location>
        <begin position="24"/>
        <end position="26"/>
    </location>
</feature>
<feature type="strand" evidence="26">
    <location>
        <begin position="29"/>
        <end position="36"/>
    </location>
</feature>
<feature type="helix" evidence="26">
    <location>
        <begin position="42"/>
        <end position="57"/>
    </location>
</feature>
<feature type="strand" evidence="26">
    <location>
        <begin position="66"/>
        <end position="72"/>
    </location>
</feature>
<feature type="strand" evidence="26">
    <location>
        <begin position="75"/>
        <end position="81"/>
    </location>
</feature>
<feature type="helix" evidence="26">
    <location>
        <begin position="88"/>
        <end position="94"/>
    </location>
</feature>
<feature type="turn" evidence="26">
    <location>
        <begin position="95"/>
        <end position="97"/>
    </location>
</feature>
<feature type="helix" evidence="26">
    <location>
        <begin position="102"/>
        <end position="121"/>
    </location>
</feature>
<feature type="helix" evidence="26">
    <location>
        <begin position="131"/>
        <end position="133"/>
    </location>
</feature>
<feature type="strand" evidence="26">
    <location>
        <begin position="134"/>
        <end position="136"/>
    </location>
</feature>
<feature type="strand" evidence="26">
    <location>
        <begin position="142"/>
        <end position="144"/>
    </location>
</feature>
<feature type="strand" evidence="26">
    <location>
        <begin position="149"/>
        <end position="151"/>
    </location>
</feature>
<feature type="helix" evidence="26">
    <location>
        <begin position="155"/>
        <end position="164"/>
    </location>
</feature>
<feature type="helix" evidence="26">
    <location>
        <begin position="172"/>
        <end position="175"/>
    </location>
</feature>
<feature type="helix" evidence="26">
    <location>
        <begin position="182"/>
        <end position="198"/>
    </location>
</feature>
<feature type="helix" evidence="26">
    <location>
        <begin position="208"/>
        <end position="217"/>
    </location>
</feature>
<feature type="helix" evidence="26">
    <location>
        <begin position="229"/>
        <end position="238"/>
    </location>
</feature>
<feature type="helix" evidence="26">
    <location>
        <begin position="243"/>
        <end position="245"/>
    </location>
</feature>
<feature type="helix" evidence="26">
    <location>
        <begin position="249"/>
        <end position="253"/>
    </location>
</feature>
<feature type="helix" evidence="26">
    <location>
        <begin position="256"/>
        <end position="259"/>
    </location>
</feature>
<feature type="helix" evidence="26">
    <location>
        <begin position="260"/>
        <end position="264"/>
    </location>
</feature>
<feature type="helix" evidence="26">
    <location>
        <begin position="268"/>
        <end position="275"/>
    </location>
</feature>
<comment type="function">
    <text evidence="2 10 11">Phosphorylates serines and threonines, but also appears to possess tyrosine kinase activity (PubMed:20230784). Involved in DNA damage checkpoint control and for proper DNA damage repair (PubMed:20230784). In response to injury that includes DNA damage, NEK1 phosphorylates VDAC1 to limit mitochondrial cell death (PubMed:20230784). May be implicated in the control of meiosis (By similarity). Involved in cilium assembly (PubMed:21211617).</text>
</comment>
<comment type="catalytic activity">
    <reaction evidence="10">
        <text>L-seryl-[protein] + ATP = O-phospho-L-seryl-[protein] + ADP + H(+)</text>
        <dbReference type="Rhea" id="RHEA:17989"/>
        <dbReference type="Rhea" id="RHEA-COMP:9863"/>
        <dbReference type="Rhea" id="RHEA-COMP:11604"/>
        <dbReference type="ChEBI" id="CHEBI:15378"/>
        <dbReference type="ChEBI" id="CHEBI:29999"/>
        <dbReference type="ChEBI" id="CHEBI:30616"/>
        <dbReference type="ChEBI" id="CHEBI:83421"/>
        <dbReference type="ChEBI" id="CHEBI:456216"/>
        <dbReference type="EC" id="2.7.11.1"/>
    </reaction>
</comment>
<comment type="catalytic activity">
    <reaction evidence="10">
        <text>L-threonyl-[protein] + ATP = O-phospho-L-threonyl-[protein] + ADP + H(+)</text>
        <dbReference type="Rhea" id="RHEA:46608"/>
        <dbReference type="Rhea" id="RHEA-COMP:11060"/>
        <dbReference type="Rhea" id="RHEA-COMP:11605"/>
        <dbReference type="ChEBI" id="CHEBI:15378"/>
        <dbReference type="ChEBI" id="CHEBI:30013"/>
        <dbReference type="ChEBI" id="CHEBI:30616"/>
        <dbReference type="ChEBI" id="CHEBI:61977"/>
        <dbReference type="ChEBI" id="CHEBI:456216"/>
        <dbReference type="EC" id="2.7.11.1"/>
    </reaction>
</comment>
<comment type="cofactor">
    <cofactor>
        <name>Mg(2+)</name>
        <dbReference type="ChEBI" id="CHEBI:18420"/>
    </cofactor>
</comment>
<comment type="subunit">
    <text evidence="2 13">Binds to CBY2 (By similarity). Found in a complex with CFAP410, NEK1 and SPATA7 (PubMed:26167768). Interacts with CFAP410 (PubMed:26167768). Interacts (via Ser-1052 phosphorylated form) with 14-3-3 proteins (By similarity).</text>
</comment>
<comment type="interaction">
    <interactant intactId="EBI-373615">
        <id>Q96PY6</id>
    </interactant>
    <interactant intactId="EBI-1044902">
        <id>Q96Q42</id>
        <label>ALS2</label>
    </interactant>
    <organismsDiffer>false</organismsDiffer>
    <experiments>2</experiments>
</comment>
<comment type="interaction">
    <interactant intactId="EBI-373615">
        <id>Q96PY6</id>
    </interactant>
    <interactant intactId="EBI-396435">
        <id>Q99689</id>
        <label>FEZ1</label>
    </interactant>
    <organismsDiffer>false</organismsDiffer>
    <experiments>2</experiments>
</comment>
<comment type="interaction">
    <interactant intactId="EBI-373615">
        <id>Q96PY6</id>
    </interactant>
    <interactant intactId="EBI-396453">
        <id>Q9UHY8</id>
        <label>FEZ2</label>
    </interactant>
    <organismsDiffer>false</organismsDiffer>
    <experiments>2</experiments>
</comment>
<comment type="interaction">
    <interactant intactId="EBI-373615">
        <id>Q96PY6</id>
    </interactant>
    <interactant intactId="EBI-5323863">
        <id>Q5S007</id>
        <label>LRRK2</label>
    </interactant>
    <organismsDiffer>false</organismsDiffer>
    <experiments>2</experiments>
</comment>
<comment type="interaction">
    <interactant intactId="EBI-373615">
        <id>Q96PY6</id>
    </interactant>
    <interactant intactId="EBI-306940">
        <id>Q04917</id>
        <label>YWHAH</label>
    </interactant>
    <organismsDiffer>false</organismsDiffer>
    <experiments>6</experiments>
</comment>
<comment type="subcellular location">
    <subcellularLocation>
        <location evidence="6 22">Nucleus</location>
    </subcellularLocation>
    <subcellularLocation>
        <location evidence="2">Cytoplasm</location>
        <location evidence="2">Cytoskeleton</location>
        <location evidence="2">Microtubule organizing center</location>
        <location evidence="2">Centrosome</location>
    </subcellularLocation>
    <subcellularLocation>
        <location evidence="9">Cytoplasm</location>
    </subcellularLocation>
    <text evidence="2 6 11">Associated with the pericentriolar material (PubMed:21211617). Localizes to centrosome during interphase and mitosis (By similarity). Translocated from cytoplasm to discrete nuclear foci at sites of DNA damage (PubMed:15604234).</text>
</comment>
<comment type="alternative products">
    <event type="alternative splicing"/>
    <isoform>
        <id>Q96PY6-1</id>
        <name>1</name>
        <sequence type="displayed"/>
    </isoform>
    <isoform>
        <id>Q96PY6-2</id>
        <name>2</name>
        <sequence type="described" ref="VSP_004870"/>
    </isoform>
    <isoform>
        <id>Q96PY6-3</id>
        <name>3</name>
        <sequence type="described" ref="VSP_035439"/>
    </isoform>
    <isoform>
        <id>Q96PY6-4</id>
        <name>4</name>
        <sequence type="described" ref="VSP_035435 VSP_035436"/>
    </isoform>
    <isoform>
        <id>Q96PY6-5</id>
        <name>5</name>
        <sequence type="described" ref="VSP_035437 VSP_035438"/>
    </isoform>
    <isoform>
        <id>Q96PY6-6</id>
        <name>6</name>
        <sequence type="described" ref="VSP_035436 VSP_035439"/>
    </isoform>
</comment>
<comment type="tissue specificity">
    <text evidence="11">High fetal expression in the brain and kidney.</text>
</comment>
<comment type="disease" evidence="12">
    <disease id="DI-03018">
        <name>Short-rib thoracic dysplasia 6 with or without polydactyly</name>
        <acronym>SRTD6</acronym>
        <description>A form of short-rib thoracic dysplasia, a group of autosomal recessive ciliopathies that are characterized by a constricted thoracic cage, short ribs, shortened tubular bones, and a 'trident' appearance of the acetabular roof. Polydactyly is variably present. Non-skeletal involvement can include cleft lip/palate as well as anomalies of major organs such as the brain, eye, heart, kidneys, liver, pancreas, intestines, and genitalia. Some forms of the disease are lethal in the neonatal period due to respiratory insufficiency secondary to a severely restricted thoracic cage, whereas others are compatible with life. Disease spectrum encompasses Ellis-van Creveld syndrome, asphyxiating thoracic dystrophy (Jeune syndrome), Mainzer-Saldino syndrome, and short rib-polydactyly syndrome.</description>
        <dbReference type="MIM" id="263520"/>
    </disease>
    <text evidence="11">The disease is caused by variants affecting the gene represented in this entry. In some cases NEK1 mutations result in disease phenotype in the presence of mutations in DYNC2H1 indicating digenic inheritance (digenic short rib-polydactyly syndrome 3/6 with polydactyly) (PubMed:21211617).</text>
</comment>
<comment type="disease" evidence="14 15">
    <disease id="DI-05206">
        <name>Amyotrophic lateral sclerosis 24</name>
        <acronym>ALS24</acronym>
        <description>A form of amyotrophic lateral sclerosis, a neurodegenerative disorder affecting upper motor neurons in the brain and lower motor neurons in the brain stem and spinal cord, resulting in fatal paralysis. Sensory abnormalities are absent. The pathologic hallmarks of the disease include pallor of the corticospinal tract due to loss of motor neurons, presence of ubiquitin-positive inclusions within surviving motor neurons, and deposition of pathologic aggregates. The etiology of amyotrophic lateral sclerosis is likely to be multifactorial, involving both genetic and environmental factors. The disease is inherited in 5-10% of the cases.</description>
        <dbReference type="MIM" id="617892"/>
    </disease>
    <text>Disease susceptibility is associated with variants affecting the gene represented in this entry.</text>
</comment>
<comment type="disease" evidence="16">
    <disease id="DI-06854">
        <name>Orofaciodigital syndrome 2</name>
        <acronym>OFD2</acronym>
        <description>A form of orofaciodigital syndrome, a group of heterogeneous disorders characterized by malformations of the oral cavity, face and digits, and associated phenotypic abnormalities that lead to the delineation of various subtypes. OFD2 is an autosomal recessive form characterized by cleft lip/palate, lobulated tongue with nodules, dental anomalies, maxillary hypoplasia, conductive hearing loss, polydactyly, syndactyly, brachydactyly, and mesomelic lower limb shortening.</description>
        <dbReference type="MIM" id="252100"/>
    </disease>
    <text>The disease may be caused by variants affecting the gene represented in this entry.</text>
</comment>
<comment type="similarity">
    <text evidence="21">Belongs to the protein kinase superfamily. NEK Ser/Thr protein kinase family. NIMA subfamily.</text>
</comment>
<comment type="sequence caution" evidence="21">
    <conflict type="miscellaneous discrepancy">
        <sequence resource="EMBL-CDS" id="AAH15147"/>
    </conflict>
    <text>Contaminating sequence. Potential poly-A sequence.</text>
</comment>
<comment type="sequence caution" evidence="21">
    <conflict type="erroneous initiation">
        <sequence resource="EMBL-CDS" id="BAB15207"/>
    </conflict>
    <text>Truncated N-terminus.</text>
</comment>
<comment type="sequence caution" evidence="21">
    <conflict type="erroneous initiation">
        <sequence resource="EMBL-CDS" id="BAB55209"/>
    </conflict>
    <text>Truncated N-terminus.</text>
</comment>
<comment type="sequence caution" evidence="21">
    <conflict type="erroneous initiation">
        <sequence resource="EMBL-CDS" id="BAB67794"/>
    </conflict>
    <text>Extended N-terminus.</text>
</comment>
<evidence type="ECO:0000250" key="1"/>
<evidence type="ECO:0000250" key="2">
    <source>
        <dbReference type="UniProtKB" id="P51954"/>
    </source>
</evidence>
<evidence type="ECO:0000255" key="3">
    <source>
        <dbReference type="PROSITE-ProRule" id="PRU00159"/>
    </source>
</evidence>
<evidence type="ECO:0000255" key="4">
    <source>
        <dbReference type="PROSITE-ProRule" id="PRU10027"/>
    </source>
</evidence>
<evidence type="ECO:0000256" key="5">
    <source>
        <dbReference type="SAM" id="MobiDB-lite"/>
    </source>
</evidence>
<evidence type="ECO:0000269" key="6">
    <source>
    </source>
</evidence>
<evidence type="ECO:0000269" key="7">
    <source>
    </source>
</evidence>
<evidence type="ECO:0000269" key="8">
    <source>
    </source>
</evidence>
<evidence type="ECO:0000269" key="9">
    <source>
    </source>
</evidence>
<evidence type="ECO:0000269" key="10">
    <source>
    </source>
</evidence>
<evidence type="ECO:0000269" key="11">
    <source>
    </source>
</evidence>
<evidence type="ECO:0000269" key="12">
    <source>
    </source>
</evidence>
<evidence type="ECO:0000269" key="13">
    <source>
    </source>
</evidence>
<evidence type="ECO:0000269" key="14">
    <source>
    </source>
</evidence>
<evidence type="ECO:0000269" key="15">
    <source>
    </source>
</evidence>
<evidence type="ECO:0000269" key="16">
    <source>
    </source>
</evidence>
<evidence type="ECO:0000303" key="17">
    <source>
    </source>
</evidence>
<evidence type="ECO:0000303" key="18">
    <source>
    </source>
</evidence>
<evidence type="ECO:0000303" key="19">
    <source>
    </source>
</evidence>
<evidence type="ECO:0000303" key="20">
    <source>
    </source>
</evidence>
<evidence type="ECO:0000305" key="21"/>
<evidence type="ECO:0000305" key="22">
    <source>
    </source>
</evidence>
<evidence type="ECO:0007744" key="23">
    <source>
    </source>
</evidence>
<evidence type="ECO:0007744" key="24">
    <source>
    </source>
</evidence>
<evidence type="ECO:0007744" key="25">
    <source>
    </source>
</evidence>
<evidence type="ECO:0007829" key="26">
    <source>
        <dbReference type="PDB" id="4B9D"/>
    </source>
</evidence>
<protein>
    <recommendedName>
        <fullName>Serine/threonine-protein kinase Nek1</fullName>
        <ecNumber evidence="10">2.7.11.1</ecNumber>
    </recommendedName>
    <alternativeName>
        <fullName>Never in mitosis A-related kinase 1</fullName>
        <shortName>NimA-related protein kinase 1</shortName>
    </alternativeName>
    <alternativeName>
        <fullName>Renal carcinoma antigen NY-REN-55</fullName>
    </alternativeName>
</protein>
<proteinExistence type="evidence at protein level"/>
<accession>Q96PY6</accession>
<accession>G5E9Z3</accession>
<accession>Q05DG5</accession>
<accession>Q14CB7</accession>
<accession>Q5H9T1</accession>
<accession>Q6PIB8</accession>
<accession>Q96SS2</accession>
<accession>Q9H6P7</accession>
<accession>Q9Y594</accession>
<organism>
    <name type="scientific">Homo sapiens</name>
    <name type="common">Human</name>
    <dbReference type="NCBI Taxonomy" id="9606"/>
    <lineage>
        <taxon>Eukaryota</taxon>
        <taxon>Metazoa</taxon>
        <taxon>Chordata</taxon>
        <taxon>Craniata</taxon>
        <taxon>Vertebrata</taxon>
        <taxon>Euteleostomi</taxon>
        <taxon>Mammalia</taxon>
        <taxon>Eutheria</taxon>
        <taxon>Euarchontoglires</taxon>
        <taxon>Primates</taxon>
        <taxon>Haplorrhini</taxon>
        <taxon>Catarrhini</taxon>
        <taxon>Hominidae</taxon>
        <taxon>Homo</taxon>
    </lineage>
</organism>
<name>NEK1_HUMAN</name>
<dbReference type="EC" id="2.7.11.1" evidence="10"/>
<dbReference type="EMBL" id="AB067488">
    <property type="protein sequence ID" value="BAB67794.1"/>
    <property type="status" value="ALT_INIT"/>
    <property type="molecule type" value="mRNA"/>
</dbReference>
<dbReference type="EMBL" id="CR933642">
    <property type="protein sequence ID" value="CAI45943.1"/>
    <property type="molecule type" value="mRNA"/>
</dbReference>
<dbReference type="EMBL" id="AC116615">
    <property type="status" value="NOT_ANNOTATED_CDS"/>
    <property type="molecule type" value="Genomic_DNA"/>
</dbReference>
<dbReference type="EMBL" id="AC116621">
    <property type="status" value="NOT_ANNOTATED_CDS"/>
    <property type="molecule type" value="Genomic_DNA"/>
</dbReference>
<dbReference type="EMBL" id="AC084724">
    <property type="status" value="NOT_ANNOTATED_CDS"/>
    <property type="molecule type" value="Genomic_DNA"/>
</dbReference>
<dbReference type="EMBL" id="CH471056">
    <property type="protein sequence ID" value="EAX04791.1"/>
    <property type="molecule type" value="Genomic_DNA"/>
</dbReference>
<dbReference type="EMBL" id="BC015147">
    <property type="protein sequence ID" value="AAH15147.1"/>
    <property type="status" value="ALT_SEQ"/>
    <property type="molecule type" value="mRNA"/>
</dbReference>
<dbReference type="EMBL" id="BC037790">
    <property type="protein sequence ID" value="AAH37790.1"/>
    <property type="molecule type" value="mRNA"/>
</dbReference>
<dbReference type="EMBL" id="BC114491">
    <property type="protein sequence ID" value="AAI14492.1"/>
    <property type="molecule type" value="mRNA"/>
</dbReference>
<dbReference type="EMBL" id="AK025658">
    <property type="protein sequence ID" value="BAB15207.1"/>
    <property type="status" value="ALT_INIT"/>
    <property type="molecule type" value="mRNA"/>
</dbReference>
<dbReference type="EMBL" id="AK027580">
    <property type="protein sequence ID" value="BAB55209.1"/>
    <property type="status" value="ALT_INIT"/>
    <property type="molecule type" value="mRNA"/>
</dbReference>
<dbReference type="EMBL" id="AF155113">
    <property type="protein sequence ID" value="AAD42879.1"/>
    <property type="molecule type" value="mRNA"/>
</dbReference>
<dbReference type="CCDS" id="CCDS47162.1">
    <molecule id="Q96PY6-1"/>
</dbReference>
<dbReference type="CCDS" id="CCDS56348.1">
    <molecule id="Q96PY6-4"/>
</dbReference>
<dbReference type="CCDS" id="CCDS56349.1">
    <molecule id="Q96PY6-2"/>
</dbReference>
<dbReference type="CCDS" id="CCDS56350.1">
    <molecule id="Q96PY6-6"/>
</dbReference>
<dbReference type="CCDS" id="CCDS56351.1">
    <molecule id="Q96PY6-3"/>
</dbReference>
<dbReference type="RefSeq" id="NP_001186326.1">
    <molecule id="Q96PY6-3"/>
    <property type="nucleotide sequence ID" value="NM_001199397.3"/>
</dbReference>
<dbReference type="RefSeq" id="NP_001186327.1">
    <molecule id="Q96PY6-6"/>
    <property type="nucleotide sequence ID" value="NM_001199398.3"/>
</dbReference>
<dbReference type="RefSeq" id="NP_001186328.1">
    <molecule id="Q96PY6-4"/>
    <property type="nucleotide sequence ID" value="NM_001199399.3"/>
</dbReference>
<dbReference type="RefSeq" id="NP_001186329.1">
    <molecule id="Q96PY6-2"/>
    <property type="nucleotide sequence ID" value="NM_001199400.3"/>
</dbReference>
<dbReference type="RefSeq" id="NP_001361347.1">
    <molecule id="Q96PY6-3"/>
    <property type="nucleotide sequence ID" value="NM_001374418.1"/>
</dbReference>
<dbReference type="RefSeq" id="NP_001361348.1">
    <molecule id="Q96PY6-1"/>
    <property type="nucleotide sequence ID" value="NM_001374419.1"/>
</dbReference>
<dbReference type="RefSeq" id="NP_036356.1">
    <molecule id="Q96PY6-1"/>
    <property type="nucleotide sequence ID" value="NM_012224.4"/>
</dbReference>
<dbReference type="RefSeq" id="XP_011530305.1">
    <property type="nucleotide sequence ID" value="XM_011532003.1"/>
</dbReference>
<dbReference type="RefSeq" id="XP_011530306.1">
    <molecule id="Q96PY6-2"/>
    <property type="nucleotide sequence ID" value="XM_011532004.2"/>
</dbReference>
<dbReference type="RefSeq" id="XP_047271687.1">
    <molecule id="Q96PY6-6"/>
    <property type="nucleotide sequence ID" value="XM_047415731.1"/>
</dbReference>
<dbReference type="PDB" id="4APC">
    <property type="method" value="X-ray"/>
    <property type="resolution" value="2.10 A"/>
    <property type="chains" value="A/B=1-328"/>
</dbReference>
<dbReference type="PDB" id="4B9D">
    <property type="method" value="X-ray"/>
    <property type="resolution" value="1.90 A"/>
    <property type="chains" value="A/B=1-328"/>
</dbReference>
<dbReference type="PDBsum" id="4APC"/>
<dbReference type="PDBsum" id="4B9D"/>
<dbReference type="SMR" id="Q96PY6"/>
<dbReference type="BioGRID" id="110825">
    <property type="interactions" value="89"/>
</dbReference>
<dbReference type="CORUM" id="Q96PY6"/>
<dbReference type="FunCoup" id="Q96PY6">
    <property type="interactions" value="4026"/>
</dbReference>
<dbReference type="IntAct" id="Q96PY6">
    <property type="interactions" value="60"/>
</dbReference>
<dbReference type="MINT" id="Q96PY6"/>
<dbReference type="STRING" id="9606.ENSP00000424757"/>
<dbReference type="BindingDB" id="Q96PY6"/>
<dbReference type="ChEMBL" id="CHEMBL5855"/>
<dbReference type="DrugBank" id="DB12010">
    <property type="generic name" value="Fostamatinib"/>
</dbReference>
<dbReference type="DrugCentral" id="Q96PY6"/>
<dbReference type="GuidetoPHARMACOLOGY" id="2114"/>
<dbReference type="GlyGen" id="Q96PY6">
    <property type="glycosylation" value="3 sites, 2 N-linked glycans (2 sites), 1 O-linked glycan (1 site)"/>
</dbReference>
<dbReference type="iPTMnet" id="Q96PY6"/>
<dbReference type="PhosphoSitePlus" id="Q96PY6"/>
<dbReference type="BioMuta" id="NEK1"/>
<dbReference type="DMDM" id="22256934"/>
<dbReference type="jPOST" id="Q96PY6"/>
<dbReference type="MassIVE" id="Q96PY6"/>
<dbReference type="PaxDb" id="9606-ENSP00000424757"/>
<dbReference type="PeptideAtlas" id="Q96PY6"/>
<dbReference type="ProteomicsDB" id="34091"/>
<dbReference type="ProteomicsDB" id="77788">
    <molecule id="Q96PY6-1"/>
</dbReference>
<dbReference type="ProteomicsDB" id="77789">
    <molecule id="Q96PY6-2"/>
</dbReference>
<dbReference type="ProteomicsDB" id="77790">
    <molecule id="Q96PY6-3"/>
</dbReference>
<dbReference type="ProteomicsDB" id="77791">
    <molecule id="Q96PY6-4"/>
</dbReference>
<dbReference type="ProteomicsDB" id="77792">
    <molecule id="Q96PY6-5"/>
</dbReference>
<dbReference type="Pumba" id="Q96PY6"/>
<dbReference type="TopDownProteomics" id="Q96PY6-3">
    <molecule id="Q96PY6-3"/>
</dbReference>
<dbReference type="Antibodypedia" id="28454">
    <property type="antibodies" value="146 antibodies from 27 providers"/>
</dbReference>
<dbReference type="DNASU" id="4750"/>
<dbReference type="Ensembl" id="ENST00000439128.6">
    <molecule id="Q96PY6-1"/>
    <property type="protein sequence ID" value="ENSP00000408020.2"/>
    <property type="gene ID" value="ENSG00000137601.18"/>
</dbReference>
<dbReference type="Ensembl" id="ENST00000507142.6">
    <molecule id="Q96PY6-3"/>
    <property type="protein sequence ID" value="ENSP00000424757.2"/>
    <property type="gene ID" value="ENSG00000137601.18"/>
</dbReference>
<dbReference type="Ensembl" id="ENST00000510533.5">
    <molecule id="Q96PY6-2"/>
    <property type="protein sequence ID" value="ENSP00000427653.1"/>
    <property type="gene ID" value="ENSG00000137601.18"/>
</dbReference>
<dbReference type="Ensembl" id="ENST00000511633.5">
    <molecule id="Q96PY6-6"/>
    <property type="protein sequence ID" value="ENSP00000423332.1"/>
    <property type="gene ID" value="ENSG00000137601.18"/>
</dbReference>
<dbReference type="Ensembl" id="ENST00000512193.5">
    <molecule id="Q96PY6-4"/>
    <property type="protein sequence ID" value="ENSP00000424938.1"/>
    <property type="gene ID" value="ENSG00000137601.18"/>
</dbReference>
<dbReference type="GeneID" id="4750"/>
<dbReference type="KEGG" id="hsa:4750"/>
<dbReference type="MANE-Select" id="ENST00000507142.6">
    <molecule id="Q96PY6-3"/>
    <property type="protein sequence ID" value="ENSP00000424757.2"/>
    <property type="RefSeq nucleotide sequence ID" value="NM_001199397.3"/>
    <property type="RefSeq protein sequence ID" value="NP_001186326.1"/>
</dbReference>
<dbReference type="UCSC" id="uc003isb.3">
    <molecule id="Q96PY6-1"/>
    <property type="organism name" value="human"/>
</dbReference>
<dbReference type="AGR" id="HGNC:7744"/>
<dbReference type="CTD" id="4750"/>
<dbReference type="DisGeNET" id="4750"/>
<dbReference type="GeneCards" id="NEK1"/>
<dbReference type="HGNC" id="HGNC:7744">
    <property type="gene designation" value="NEK1"/>
</dbReference>
<dbReference type="HPA" id="ENSG00000137601">
    <property type="expression patterns" value="Low tissue specificity"/>
</dbReference>
<dbReference type="MalaCards" id="NEK1"/>
<dbReference type="MIM" id="252100">
    <property type="type" value="phenotype"/>
</dbReference>
<dbReference type="MIM" id="263520">
    <property type="type" value="phenotype"/>
</dbReference>
<dbReference type="MIM" id="604588">
    <property type="type" value="gene"/>
</dbReference>
<dbReference type="MIM" id="617892">
    <property type="type" value="phenotype"/>
</dbReference>
<dbReference type="neXtProt" id="NX_Q96PY6"/>
<dbReference type="OpenTargets" id="ENSG00000137601"/>
<dbReference type="Orphanet" id="803">
    <property type="disease" value="Amyotrophic lateral sclerosis"/>
</dbReference>
<dbReference type="Orphanet" id="2751">
    <property type="disease" value="Orofaciodigital syndrome type 2"/>
</dbReference>
<dbReference type="Orphanet" id="93269">
    <property type="disease" value="Short rib-polydactyly syndrome, Majewski type"/>
</dbReference>
<dbReference type="PharmGKB" id="PA31545"/>
<dbReference type="VEuPathDB" id="HostDB:ENSG00000137601"/>
<dbReference type="eggNOG" id="KOG0589">
    <property type="taxonomic scope" value="Eukaryota"/>
</dbReference>
<dbReference type="GeneTree" id="ENSGT00940000158460"/>
<dbReference type="HOGENOM" id="CLU_000288_60_1_1"/>
<dbReference type="InParanoid" id="Q96PY6"/>
<dbReference type="OMA" id="ELNEEWH"/>
<dbReference type="OrthoDB" id="248923at2759"/>
<dbReference type="PAN-GO" id="Q96PY6">
    <property type="GO annotations" value="2 GO annotations based on evolutionary models"/>
</dbReference>
<dbReference type="PhylomeDB" id="Q96PY6"/>
<dbReference type="TreeFam" id="TF333575"/>
<dbReference type="PathwayCommons" id="Q96PY6"/>
<dbReference type="Reactome" id="R-HSA-9861718">
    <property type="pathway name" value="Regulation of pyruvate metabolism"/>
</dbReference>
<dbReference type="SignaLink" id="Q96PY6"/>
<dbReference type="SIGNOR" id="Q96PY6"/>
<dbReference type="BioGRID-ORCS" id="4750">
    <property type="hits" value="51 hits in 1199 CRISPR screens"/>
</dbReference>
<dbReference type="ChiTaRS" id="NEK1">
    <property type="organism name" value="human"/>
</dbReference>
<dbReference type="EvolutionaryTrace" id="Q96PY6"/>
<dbReference type="GeneWiki" id="NEK1"/>
<dbReference type="GenomeRNAi" id="4750"/>
<dbReference type="Pharos" id="Q96PY6">
    <property type="development level" value="Tchem"/>
</dbReference>
<dbReference type="PRO" id="PR:Q96PY6"/>
<dbReference type="Proteomes" id="UP000005640">
    <property type="component" value="Chromosome 4"/>
</dbReference>
<dbReference type="RNAct" id="Q96PY6">
    <property type="molecule type" value="protein"/>
</dbReference>
<dbReference type="Bgee" id="ENSG00000137601">
    <property type="expression patterns" value="Expressed in secondary oocyte and 212 other cell types or tissues"/>
</dbReference>
<dbReference type="ExpressionAtlas" id="Q96PY6">
    <property type="expression patterns" value="baseline and differential"/>
</dbReference>
<dbReference type="GO" id="GO:0034451">
    <property type="term" value="C:centriolar satellite"/>
    <property type="evidence" value="ECO:0000314"/>
    <property type="project" value="HPA"/>
</dbReference>
<dbReference type="GO" id="GO:0005813">
    <property type="term" value="C:centrosome"/>
    <property type="evidence" value="ECO:0000314"/>
    <property type="project" value="UniProtKB"/>
</dbReference>
<dbReference type="GO" id="GO:0005929">
    <property type="term" value="C:cilium"/>
    <property type="evidence" value="ECO:0000314"/>
    <property type="project" value="HPA"/>
</dbReference>
<dbReference type="GO" id="GO:0005737">
    <property type="term" value="C:cytoplasm"/>
    <property type="evidence" value="ECO:0000314"/>
    <property type="project" value="MGI"/>
</dbReference>
<dbReference type="GO" id="GO:0005829">
    <property type="term" value="C:cytosol"/>
    <property type="evidence" value="ECO:0000314"/>
    <property type="project" value="HPA"/>
</dbReference>
<dbReference type="GO" id="GO:0005654">
    <property type="term" value="C:nucleoplasm"/>
    <property type="evidence" value="ECO:0000314"/>
    <property type="project" value="HPA"/>
</dbReference>
<dbReference type="GO" id="GO:0005634">
    <property type="term" value="C:nucleus"/>
    <property type="evidence" value="ECO:0000314"/>
    <property type="project" value="MGI"/>
</dbReference>
<dbReference type="GO" id="GO:0000242">
    <property type="term" value="C:pericentriolar material"/>
    <property type="evidence" value="ECO:0000314"/>
    <property type="project" value="UniProtKB"/>
</dbReference>
<dbReference type="GO" id="GO:0071889">
    <property type="term" value="F:14-3-3 protein binding"/>
    <property type="evidence" value="ECO:0000250"/>
    <property type="project" value="UniProtKB"/>
</dbReference>
<dbReference type="GO" id="GO:0005524">
    <property type="term" value="F:ATP binding"/>
    <property type="evidence" value="ECO:0007669"/>
    <property type="project" value="UniProtKB-KW"/>
</dbReference>
<dbReference type="GO" id="GO:0016301">
    <property type="term" value="F:kinase activity"/>
    <property type="evidence" value="ECO:0000315"/>
    <property type="project" value="CACAO"/>
</dbReference>
<dbReference type="GO" id="GO:0046872">
    <property type="term" value="F:metal ion binding"/>
    <property type="evidence" value="ECO:0007669"/>
    <property type="project" value="UniProtKB-KW"/>
</dbReference>
<dbReference type="GO" id="GO:0004672">
    <property type="term" value="F:protein kinase activity"/>
    <property type="evidence" value="ECO:0000314"/>
    <property type="project" value="MGI"/>
</dbReference>
<dbReference type="GO" id="GO:0106310">
    <property type="term" value="F:protein serine kinase activity"/>
    <property type="evidence" value="ECO:0007669"/>
    <property type="project" value="RHEA"/>
</dbReference>
<dbReference type="GO" id="GO:0004674">
    <property type="term" value="F:protein serine/threonine kinase activity"/>
    <property type="evidence" value="ECO:0007669"/>
    <property type="project" value="UniProtKB-KW"/>
</dbReference>
<dbReference type="GO" id="GO:0004713">
    <property type="term" value="F:protein tyrosine kinase activity"/>
    <property type="evidence" value="ECO:0007669"/>
    <property type="project" value="UniProtKB-KW"/>
</dbReference>
<dbReference type="GO" id="GO:0051301">
    <property type="term" value="P:cell division"/>
    <property type="evidence" value="ECO:0007669"/>
    <property type="project" value="UniProtKB-KW"/>
</dbReference>
<dbReference type="GO" id="GO:0060271">
    <property type="term" value="P:cilium assembly"/>
    <property type="evidence" value="ECO:0000315"/>
    <property type="project" value="UniProtKB"/>
</dbReference>
<dbReference type="GO" id="GO:0006468">
    <property type="term" value="P:protein phosphorylation"/>
    <property type="evidence" value="ECO:0000314"/>
    <property type="project" value="CACAO"/>
</dbReference>
<dbReference type="CDD" id="cd08218">
    <property type="entry name" value="STKc_Nek1"/>
    <property type="match status" value="1"/>
</dbReference>
<dbReference type="FunFam" id="3.30.200.20:FF:000097">
    <property type="entry name" value="Probable serine/threonine-protein kinase nek1"/>
    <property type="match status" value="1"/>
</dbReference>
<dbReference type="FunFam" id="1.10.510.10:FF:000172">
    <property type="entry name" value="serine/threonine-protein kinase Nek1 isoform X1"/>
    <property type="match status" value="1"/>
</dbReference>
<dbReference type="Gene3D" id="3.30.200.20">
    <property type="entry name" value="Phosphorylase Kinase, domain 1"/>
    <property type="match status" value="1"/>
</dbReference>
<dbReference type="Gene3D" id="1.10.510.10">
    <property type="entry name" value="Transferase(Phosphotransferase) domain 1"/>
    <property type="match status" value="1"/>
</dbReference>
<dbReference type="InterPro" id="IPR011009">
    <property type="entry name" value="Kinase-like_dom_sf"/>
</dbReference>
<dbReference type="InterPro" id="IPR051131">
    <property type="entry name" value="NEK_Ser/Thr_kinase_NIMA"/>
</dbReference>
<dbReference type="InterPro" id="IPR000719">
    <property type="entry name" value="Prot_kinase_dom"/>
</dbReference>
<dbReference type="InterPro" id="IPR017441">
    <property type="entry name" value="Protein_kinase_ATP_BS"/>
</dbReference>
<dbReference type="InterPro" id="IPR008271">
    <property type="entry name" value="Ser/Thr_kinase_AS"/>
</dbReference>
<dbReference type="PANTHER" id="PTHR44899">
    <property type="entry name" value="CAMK FAMILY PROTEIN KINASE"/>
    <property type="match status" value="1"/>
</dbReference>
<dbReference type="PANTHER" id="PTHR44899:SF4">
    <property type="entry name" value="SERINE_THREONINE-PROTEIN KINASE NEK1"/>
    <property type="match status" value="1"/>
</dbReference>
<dbReference type="Pfam" id="PF00069">
    <property type="entry name" value="Pkinase"/>
    <property type="match status" value="1"/>
</dbReference>
<dbReference type="SMART" id="SM00220">
    <property type="entry name" value="S_TKc"/>
    <property type="match status" value="1"/>
</dbReference>
<dbReference type="SUPFAM" id="SSF56112">
    <property type="entry name" value="Protein kinase-like (PK-like)"/>
    <property type="match status" value="1"/>
</dbReference>
<dbReference type="PROSITE" id="PS00107">
    <property type="entry name" value="PROTEIN_KINASE_ATP"/>
    <property type="match status" value="1"/>
</dbReference>
<dbReference type="PROSITE" id="PS50011">
    <property type="entry name" value="PROTEIN_KINASE_DOM"/>
    <property type="match status" value="1"/>
</dbReference>
<dbReference type="PROSITE" id="PS00108">
    <property type="entry name" value="PROTEIN_KINASE_ST"/>
    <property type="match status" value="1"/>
</dbReference>